<keyword id="KW-0030">Aminoacyl-tRNA synthetase</keyword>
<keyword id="KW-0067">ATP-binding</keyword>
<keyword id="KW-0436">Ligase</keyword>
<keyword id="KW-0479">Metal-binding</keyword>
<keyword id="KW-0547">Nucleotide-binding</keyword>
<keyword id="KW-0862">Zinc</keyword>
<name>GLUQ_BURCJ</name>
<evidence type="ECO:0000255" key="1">
    <source>
        <dbReference type="HAMAP-Rule" id="MF_01428"/>
    </source>
</evidence>
<reference key="1">
    <citation type="journal article" date="2009" name="J. Bacteriol.">
        <title>The genome of Burkholderia cenocepacia J2315, an epidemic pathogen of cystic fibrosis patients.</title>
        <authorList>
            <person name="Holden M.T."/>
            <person name="Seth-Smith H.M."/>
            <person name="Crossman L.C."/>
            <person name="Sebaihia M."/>
            <person name="Bentley S.D."/>
            <person name="Cerdeno-Tarraga A.M."/>
            <person name="Thomson N.R."/>
            <person name="Bason N."/>
            <person name="Quail M.A."/>
            <person name="Sharp S."/>
            <person name="Cherevach I."/>
            <person name="Churcher C."/>
            <person name="Goodhead I."/>
            <person name="Hauser H."/>
            <person name="Holroyd N."/>
            <person name="Mungall K."/>
            <person name="Scott P."/>
            <person name="Walker D."/>
            <person name="White B."/>
            <person name="Rose H."/>
            <person name="Iversen P."/>
            <person name="Mil-Homens D."/>
            <person name="Rocha E.P."/>
            <person name="Fialho A.M."/>
            <person name="Baldwin A."/>
            <person name="Dowson C."/>
            <person name="Barrell B.G."/>
            <person name="Govan J.R."/>
            <person name="Vandamme P."/>
            <person name="Hart C.A."/>
            <person name="Mahenthiralingam E."/>
            <person name="Parkhill J."/>
        </authorList>
    </citation>
    <scope>NUCLEOTIDE SEQUENCE [LARGE SCALE GENOMIC DNA]</scope>
    <source>
        <strain>ATCC BAA-245 / DSM 16553 / LMG 16656 / NCTC 13227 / J2315 / CF5610</strain>
    </source>
</reference>
<feature type="chain" id="PRO_1000145740" description="Glutamyl-Q tRNA(Asp) synthetase">
    <location>
        <begin position="1"/>
        <end position="298"/>
    </location>
</feature>
<feature type="short sequence motif" description="'HIGH' region">
    <location>
        <begin position="11"/>
        <end position="21"/>
    </location>
</feature>
<feature type="short sequence motif" description="'KMSKS' region">
    <location>
        <begin position="239"/>
        <end position="243"/>
    </location>
</feature>
<feature type="binding site" evidence="1">
    <location>
        <begin position="8"/>
        <end position="12"/>
    </location>
    <ligand>
        <name>L-glutamate</name>
        <dbReference type="ChEBI" id="CHEBI:29985"/>
    </ligand>
</feature>
<feature type="binding site" evidence="1">
    <location>
        <position position="44"/>
    </location>
    <ligand>
        <name>L-glutamate</name>
        <dbReference type="ChEBI" id="CHEBI:29985"/>
    </ligand>
</feature>
<feature type="binding site" evidence="1">
    <location>
        <position position="100"/>
    </location>
    <ligand>
        <name>Zn(2+)</name>
        <dbReference type="ChEBI" id="CHEBI:29105"/>
    </ligand>
</feature>
<feature type="binding site" evidence="1">
    <location>
        <position position="102"/>
    </location>
    <ligand>
        <name>Zn(2+)</name>
        <dbReference type="ChEBI" id="CHEBI:29105"/>
    </ligand>
</feature>
<feature type="binding site" evidence="1">
    <location>
        <position position="123"/>
    </location>
    <ligand>
        <name>Zn(2+)</name>
        <dbReference type="ChEBI" id="CHEBI:29105"/>
    </ligand>
</feature>
<feature type="binding site" evidence="1">
    <location>
        <position position="127"/>
    </location>
    <ligand>
        <name>Zn(2+)</name>
        <dbReference type="ChEBI" id="CHEBI:29105"/>
    </ligand>
</feature>
<feature type="binding site" evidence="1">
    <location>
        <position position="183"/>
    </location>
    <ligand>
        <name>L-glutamate</name>
        <dbReference type="ChEBI" id="CHEBI:29985"/>
    </ligand>
</feature>
<feature type="binding site" evidence="1">
    <location>
        <position position="201"/>
    </location>
    <ligand>
        <name>L-glutamate</name>
        <dbReference type="ChEBI" id="CHEBI:29985"/>
    </ligand>
</feature>
<feature type="binding site" evidence="1">
    <location>
        <position position="242"/>
    </location>
    <ligand>
        <name>ATP</name>
        <dbReference type="ChEBI" id="CHEBI:30616"/>
    </ligand>
</feature>
<accession>B4E6D7</accession>
<organism>
    <name type="scientific">Burkholderia cenocepacia (strain ATCC BAA-245 / DSM 16553 / LMG 16656 / NCTC 13227 / J2315 / CF5610)</name>
    <name type="common">Burkholderia cepacia (strain J2315)</name>
    <dbReference type="NCBI Taxonomy" id="216591"/>
    <lineage>
        <taxon>Bacteria</taxon>
        <taxon>Pseudomonadati</taxon>
        <taxon>Pseudomonadota</taxon>
        <taxon>Betaproteobacteria</taxon>
        <taxon>Burkholderiales</taxon>
        <taxon>Burkholderiaceae</taxon>
        <taxon>Burkholderia</taxon>
        <taxon>Burkholderia cepacia complex</taxon>
    </lineage>
</organism>
<dbReference type="EC" id="6.1.1.-" evidence="1"/>
<dbReference type="EMBL" id="AM747720">
    <property type="protein sequence ID" value="CAR52712.1"/>
    <property type="molecule type" value="Genomic_DNA"/>
</dbReference>
<dbReference type="SMR" id="B4E6D7"/>
<dbReference type="KEGG" id="bcj:BCAL2411"/>
<dbReference type="eggNOG" id="COG0008">
    <property type="taxonomic scope" value="Bacteria"/>
</dbReference>
<dbReference type="HOGENOM" id="CLU_015768_0_1_4"/>
<dbReference type="BioCyc" id="BCEN216591:G1G1V-2659-MONOMER"/>
<dbReference type="Proteomes" id="UP000001035">
    <property type="component" value="Chromosome 1"/>
</dbReference>
<dbReference type="GO" id="GO:0005829">
    <property type="term" value="C:cytosol"/>
    <property type="evidence" value="ECO:0007669"/>
    <property type="project" value="TreeGrafter"/>
</dbReference>
<dbReference type="GO" id="GO:0005524">
    <property type="term" value="F:ATP binding"/>
    <property type="evidence" value="ECO:0007669"/>
    <property type="project" value="UniProtKB-KW"/>
</dbReference>
<dbReference type="GO" id="GO:0004818">
    <property type="term" value="F:glutamate-tRNA ligase activity"/>
    <property type="evidence" value="ECO:0007669"/>
    <property type="project" value="TreeGrafter"/>
</dbReference>
<dbReference type="GO" id="GO:0008270">
    <property type="term" value="F:zinc ion binding"/>
    <property type="evidence" value="ECO:0007669"/>
    <property type="project" value="UniProtKB-UniRule"/>
</dbReference>
<dbReference type="GO" id="GO:0006424">
    <property type="term" value="P:glutamyl-tRNA aminoacylation"/>
    <property type="evidence" value="ECO:0007669"/>
    <property type="project" value="InterPro"/>
</dbReference>
<dbReference type="GO" id="GO:0006400">
    <property type="term" value="P:tRNA modification"/>
    <property type="evidence" value="ECO:0007669"/>
    <property type="project" value="InterPro"/>
</dbReference>
<dbReference type="Gene3D" id="3.40.50.620">
    <property type="entry name" value="HUPs"/>
    <property type="match status" value="1"/>
</dbReference>
<dbReference type="HAMAP" id="MF_01428">
    <property type="entry name" value="Glu_Q_tRNA_synth"/>
    <property type="match status" value="1"/>
</dbReference>
<dbReference type="InterPro" id="IPR022380">
    <property type="entry name" value="Glu-Q_tRNA(Asp)_Synthase"/>
</dbReference>
<dbReference type="InterPro" id="IPR000924">
    <property type="entry name" value="Glu/Gln-tRNA-synth"/>
</dbReference>
<dbReference type="InterPro" id="IPR020058">
    <property type="entry name" value="Glu/Gln-tRNA-synth_Ib_cat-dom"/>
</dbReference>
<dbReference type="InterPro" id="IPR049940">
    <property type="entry name" value="GluQ/Sye"/>
</dbReference>
<dbReference type="InterPro" id="IPR014729">
    <property type="entry name" value="Rossmann-like_a/b/a_fold"/>
</dbReference>
<dbReference type="NCBIfam" id="NF004313">
    <property type="entry name" value="PRK05710.1-2"/>
    <property type="match status" value="1"/>
</dbReference>
<dbReference type="NCBIfam" id="NF004314">
    <property type="entry name" value="PRK05710.1-3"/>
    <property type="match status" value="1"/>
</dbReference>
<dbReference type="NCBIfam" id="NF004315">
    <property type="entry name" value="PRK05710.1-4"/>
    <property type="match status" value="1"/>
</dbReference>
<dbReference type="NCBIfam" id="TIGR03838">
    <property type="entry name" value="queuosine_YadB"/>
    <property type="match status" value="1"/>
</dbReference>
<dbReference type="PANTHER" id="PTHR43311">
    <property type="entry name" value="GLUTAMATE--TRNA LIGASE"/>
    <property type="match status" value="1"/>
</dbReference>
<dbReference type="PANTHER" id="PTHR43311:SF1">
    <property type="entry name" value="GLUTAMYL-Q TRNA(ASP) SYNTHETASE"/>
    <property type="match status" value="1"/>
</dbReference>
<dbReference type="Pfam" id="PF00749">
    <property type="entry name" value="tRNA-synt_1c"/>
    <property type="match status" value="1"/>
</dbReference>
<dbReference type="PRINTS" id="PR00987">
    <property type="entry name" value="TRNASYNTHGLU"/>
</dbReference>
<dbReference type="SUPFAM" id="SSF52374">
    <property type="entry name" value="Nucleotidylyl transferase"/>
    <property type="match status" value="1"/>
</dbReference>
<sequence length="298" mass="31962">MNPGYRGRFAPSPTGPLHFGSLVGALASWLDARAHGGTWLVRIEDLDGPRTVPGAADDILATLAHFGMTPDEPPIWQSTRDAAYTAALERLVAAGLVYPCGCTRKEIADSLRAAHERHTTLAYPGTCRTGLHGKPARAWRLRVPDGNDAVVTFDDRWQHAQSQNLATEVGDFVLKRADGQWAYQLAVVVDDADAGITHVVRGADLLDSTARQIYLQRCLGVPTPAYLHVPVVVDANGEKLSKQTGATALERDDPLPALRAAAAHLGLAADGDRPVHTIDAFYAAATDAWARRFGPRAG</sequence>
<gene>
    <name evidence="1" type="primary">gluQ</name>
    <name type="ordered locus">BceJ2315_23710</name>
    <name type="ORF">BCAL2411</name>
</gene>
<proteinExistence type="inferred from homology"/>
<protein>
    <recommendedName>
        <fullName evidence="1">Glutamyl-Q tRNA(Asp) synthetase</fullName>
        <shortName evidence="1">Glu-Q-RSs</shortName>
        <ecNumber evidence="1">6.1.1.-</ecNumber>
    </recommendedName>
</protein>
<comment type="function">
    <text evidence="1">Catalyzes the tRNA-independent activation of glutamate in presence of ATP and the subsequent transfer of glutamate onto a tRNA(Asp). Glutamate is transferred on the 2-amino-5-(4,5-dihydroxy-2-cyclopenten-1-yl) moiety of the queuosine in the wobble position of the QUC anticodon.</text>
</comment>
<comment type="cofactor">
    <cofactor evidence="1">
        <name>Zn(2+)</name>
        <dbReference type="ChEBI" id="CHEBI:29105"/>
    </cofactor>
    <text evidence="1">Binds 1 zinc ion per subunit.</text>
</comment>
<comment type="similarity">
    <text evidence="1">Belongs to the class-I aminoacyl-tRNA synthetase family. GluQ subfamily.</text>
</comment>